<reference key="1">
    <citation type="journal article" date="1995" name="Science">
        <title>Whole-genome random sequencing and assembly of Haemophilus influenzae Rd.</title>
        <authorList>
            <person name="Fleischmann R.D."/>
            <person name="Adams M.D."/>
            <person name="White O."/>
            <person name="Clayton R.A."/>
            <person name="Kirkness E.F."/>
            <person name="Kerlavage A.R."/>
            <person name="Bult C.J."/>
            <person name="Tomb J.-F."/>
            <person name="Dougherty B.A."/>
            <person name="Merrick J.M."/>
            <person name="McKenney K."/>
            <person name="Sutton G.G."/>
            <person name="FitzHugh W."/>
            <person name="Fields C.A."/>
            <person name="Gocayne J.D."/>
            <person name="Scott J.D."/>
            <person name="Shirley R."/>
            <person name="Liu L.-I."/>
            <person name="Glodek A."/>
            <person name="Kelley J.M."/>
            <person name="Weidman J.F."/>
            <person name="Phillips C.A."/>
            <person name="Spriggs T."/>
            <person name="Hedblom E."/>
            <person name="Cotton M.D."/>
            <person name="Utterback T.R."/>
            <person name="Hanna M.C."/>
            <person name="Nguyen D.T."/>
            <person name="Saudek D.M."/>
            <person name="Brandon R.C."/>
            <person name="Fine L.D."/>
            <person name="Fritchman J.L."/>
            <person name="Fuhrmann J.L."/>
            <person name="Geoghagen N.S.M."/>
            <person name="Gnehm C.L."/>
            <person name="McDonald L.A."/>
            <person name="Small K.V."/>
            <person name="Fraser C.M."/>
            <person name="Smith H.O."/>
            <person name="Venter J.C."/>
        </authorList>
    </citation>
    <scope>NUCLEOTIDE SEQUENCE [LARGE SCALE GENOMIC DNA]</scope>
    <source>
        <strain>ATCC 51907 / DSM 11121 / KW20 / Rd</strain>
    </source>
</reference>
<proteinExistence type="inferred from homology"/>
<keyword id="KW-0963">Cytoplasm</keyword>
<keyword id="KW-0227">DNA damage</keyword>
<keyword id="KW-0234">DNA repair</keyword>
<keyword id="KW-0378">Hydrolase</keyword>
<keyword id="KW-1185">Reference proteome</keyword>
<name>UNG_HAEIN</name>
<gene>
    <name type="primary">ung</name>
    <name type="ordered locus">HI_0018</name>
</gene>
<evidence type="ECO:0000250" key="1"/>
<evidence type="ECO:0000305" key="2"/>
<sequence length="219" mass="24848">MKNWTDVIGTEKAQPYFQHTLQQVHLARASGKTIYPPQEDVFNAFKYTAFEDVKVVILGQDPYHGPNQAHGLAFSVKPEVAIPPSLLNIYKELTQDISGFQMPSNGYLVKWAEQGVLLLNTVLTVERGMAHSHANLGWERFTDKVIAVLNEHREKLVFLLWGSHAQKKGQMIDRTRHLVLTAPHPSPLSAHRGFFGCRHFSKTNSYLESHGIKPIDWQI</sequence>
<organism>
    <name type="scientific">Haemophilus influenzae (strain ATCC 51907 / DSM 11121 / KW20 / Rd)</name>
    <dbReference type="NCBI Taxonomy" id="71421"/>
    <lineage>
        <taxon>Bacteria</taxon>
        <taxon>Pseudomonadati</taxon>
        <taxon>Pseudomonadota</taxon>
        <taxon>Gammaproteobacteria</taxon>
        <taxon>Pasteurellales</taxon>
        <taxon>Pasteurellaceae</taxon>
        <taxon>Haemophilus</taxon>
    </lineage>
</organism>
<feature type="chain" id="PRO_0000176100" description="Uracil-DNA glycosylase">
    <location>
        <begin position="1"/>
        <end position="219"/>
    </location>
</feature>
<feature type="active site" description="Proton acceptor" evidence="1">
    <location>
        <position position="61"/>
    </location>
</feature>
<protein>
    <recommendedName>
        <fullName>Uracil-DNA glycosylase</fullName>
        <shortName>UDG</shortName>
        <ecNumber>3.2.2.27</ecNumber>
    </recommendedName>
</protein>
<accession>P43731</accession>
<dbReference type="EC" id="3.2.2.27"/>
<dbReference type="EMBL" id="L42023">
    <property type="protein sequence ID" value="AAC21696.1"/>
    <property type="molecule type" value="Genomic_DNA"/>
</dbReference>
<dbReference type="PIR" id="A64043">
    <property type="entry name" value="A64043"/>
</dbReference>
<dbReference type="RefSeq" id="NP_438191.1">
    <property type="nucleotide sequence ID" value="NC_000907.1"/>
</dbReference>
<dbReference type="SMR" id="P43731"/>
<dbReference type="STRING" id="71421.HI_0018"/>
<dbReference type="EnsemblBacteria" id="AAC21696">
    <property type="protein sequence ID" value="AAC21696"/>
    <property type="gene ID" value="HI_0018"/>
</dbReference>
<dbReference type="KEGG" id="hin:HI_0018"/>
<dbReference type="PATRIC" id="fig|71421.8.peg.18"/>
<dbReference type="eggNOG" id="COG0692">
    <property type="taxonomic scope" value="Bacteria"/>
</dbReference>
<dbReference type="HOGENOM" id="CLU_032162_3_0_6"/>
<dbReference type="OrthoDB" id="9804372at2"/>
<dbReference type="PhylomeDB" id="P43731"/>
<dbReference type="BioCyc" id="HINF71421:G1GJ1-18-MONOMER"/>
<dbReference type="Proteomes" id="UP000000579">
    <property type="component" value="Chromosome"/>
</dbReference>
<dbReference type="GO" id="GO:0005737">
    <property type="term" value="C:cytoplasm"/>
    <property type="evidence" value="ECO:0007669"/>
    <property type="project" value="UniProtKB-SubCell"/>
</dbReference>
<dbReference type="GO" id="GO:0004844">
    <property type="term" value="F:uracil DNA N-glycosylase activity"/>
    <property type="evidence" value="ECO:0007669"/>
    <property type="project" value="UniProtKB-UniRule"/>
</dbReference>
<dbReference type="GO" id="GO:0097510">
    <property type="term" value="P:base-excision repair, AP site formation via deaminated base removal"/>
    <property type="evidence" value="ECO:0000318"/>
    <property type="project" value="GO_Central"/>
</dbReference>
<dbReference type="CDD" id="cd10027">
    <property type="entry name" value="UDG-F1-like"/>
    <property type="match status" value="1"/>
</dbReference>
<dbReference type="FunFam" id="3.40.470.10:FF:000001">
    <property type="entry name" value="Uracil-DNA glycosylase"/>
    <property type="match status" value="1"/>
</dbReference>
<dbReference type="Gene3D" id="3.40.470.10">
    <property type="entry name" value="Uracil-DNA glycosylase-like domain"/>
    <property type="match status" value="1"/>
</dbReference>
<dbReference type="HAMAP" id="MF_00148">
    <property type="entry name" value="UDG"/>
    <property type="match status" value="1"/>
</dbReference>
<dbReference type="InterPro" id="IPR002043">
    <property type="entry name" value="UDG_fam1"/>
</dbReference>
<dbReference type="InterPro" id="IPR018085">
    <property type="entry name" value="Ura-DNA_Glyclase_AS"/>
</dbReference>
<dbReference type="InterPro" id="IPR005122">
    <property type="entry name" value="Uracil-DNA_glycosylase-like"/>
</dbReference>
<dbReference type="InterPro" id="IPR036895">
    <property type="entry name" value="Uracil-DNA_glycosylase-like_sf"/>
</dbReference>
<dbReference type="NCBIfam" id="NF003588">
    <property type="entry name" value="PRK05254.1-1"/>
    <property type="match status" value="1"/>
</dbReference>
<dbReference type="NCBIfam" id="NF003589">
    <property type="entry name" value="PRK05254.1-2"/>
    <property type="match status" value="1"/>
</dbReference>
<dbReference type="NCBIfam" id="NF003591">
    <property type="entry name" value="PRK05254.1-4"/>
    <property type="match status" value="1"/>
</dbReference>
<dbReference type="NCBIfam" id="NF003592">
    <property type="entry name" value="PRK05254.1-5"/>
    <property type="match status" value="1"/>
</dbReference>
<dbReference type="NCBIfam" id="TIGR00628">
    <property type="entry name" value="ung"/>
    <property type="match status" value="1"/>
</dbReference>
<dbReference type="PANTHER" id="PTHR11264">
    <property type="entry name" value="URACIL-DNA GLYCOSYLASE"/>
    <property type="match status" value="1"/>
</dbReference>
<dbReference type="PANTHER" id="PTHR11264:SF0">
    <property type="entry name" value="URACIL-DNA GLYCOSYLASE"/>
    <property type="match status" value="1"/>
</dbReference>
<dbReference type="Pfam" id="PF03167">
    <property type="entry name" value="UDG"/>
    <property type="match status" value="1"/>
</dbReference>
<dbReference type="SMART" id="SM00986">
    <property type="entry name" value="UDG"/>
    <property type="match status" value="1"/>
</dbReference>
<dbReference type="SMART" id="SM00987">
    <property type="entry name" value="UreE_C"/>
    <property type="match status" value="1"/>
</dbReference>
<dbReference type="SUPFAM" id="SSF52141">
    <property type="entry name" value="Uracil-DNA glycosylase-like"/>
    <property type="match status" value="1"/>
</dbReference>
<dbReference type="PROSITE" id="PS00130">
    <property type="entry name" value="U_DNA_GLYCOSYLASE"/>
    <property type="match status" value="1"/>
</dbReference>
<comment type="function">
    <text evidence="1">Excises uracil residues from the DNA which can arise as a result of misincorporation of dUMP residues by DNA polymerase or due to deamination of cytosine.</text>
</comment>
<comment type="catalytic activity">
    <reaction>
        <text>Hydrolyzes single-stranded DNA or mismatched double-stranded DNA and polynucleotides, releasing free uracil.</text>
        <dbReference type="EC" id="3.2.2.27"/>
    </reaction>
</comment>
<comment type="subcellular location">
    <subcellularLocation>
        <location evidence="1">Cytoplasm</location>
    </subcellularLocation>
</comment>
<comment type="similarity">
    <text evidence="2">Belongs to the uracil-DNA glycosylase (UDG) superfamily. UNG family.</text>
</comment>